<dbReference type="EMBL" id="AL035709">
    <property type="protein sequence ID" value="CAB38936.1"/>
    <property type="molecule type" value="Genomic_DNA"/>
</dbReference>
<dbReference type="EMBL" id="AL161592">
    <property type="protein sequence ID" value="CAB80453.1"/>
    <property type="molecule type" value="Genomic_DNA"/>
</dbReference>
<dbReference type="EMBL" id="CP002687">
    <property type="protein sequence ID" value="AEE86848.1"/>
    <property type="molecule type" value="Genomic_DNA"/>
</dbReference>
<dbReference type="EMBL" id="BT020222">
    <property type="protein sequence ID" value="AAV66093.1"/>
    <property type="molecule type" value="mRNA"/>
</dbReference>
<dbReference type="EMBL" id="BT021138">
    <property type="protein sequence ID" value="AAX22273.1"/>
    <property type="molecule type" value="mRNA"/>
</dbReference>
<dbReference type="PIR" id="T06035">
    <property type="entry name" value="T06035"/>
</dbReference>
<dbReference type="RefSeq" id="NP_195501.1">
    <property type="nucleotide sequence ID" value="NM_119949.5"/>
</dbReference>
<dbReference type="SMR" id="Q9T075"/>
<dbReference type="FunCoup" id="Q9T075">
    <property type="interactions" value="4287"/>
</dbReference>
<dbReference type="STRING" id="3702.Q9T075"/>
<dbReference type="PaxDb" id="3702-AT4G37880.1"/>
<dbReference type="ProteomicsDB" id="228151"/>
<dbReference type="EnsemblPlants" id="AT4G37880.1">
    <property type="protein sequence ID" value="AT4G37880.1"/>
    <property type="gene ID" value="AT4G37880"/>
</dbReference>
<dbReference type="GeneID" id="829944"/>
<dbReference type="Gramene" id="AT4G37880.1">
    <property type="protein sequence ID" value="AT4G37880.1"/>
    <property type="gene ID" value="AT4G37880"/>
</dbReference>
<dbReference type="KEGG" id="ath:AT4G37880"/>
<dbReference type="Araport" id="AT4G37880"/>
<dbReference type="TAIR" id="AT4G37880"/>
<dbReference type="eggNOG" id="KOG2817">
    <property type="taxonomic scope" value="Eukaryota"/>
</dbReference>
<dbReference type="HOGENOM" id="CLU_020227_1_0_1"/>
<dbReference type="InParanoid" id="Q9T075"/>
<dbReference type="OMA" id="NDATFFY"/>
<dbReference type="PhylomeDB" id="Q9T075"/>
<dbReference type="PRO" id="PR:Q9T075"/>
<dbReference type="Proteomes" id="UP000006548">
    <property type="component" value="Chromosome 4"/>
</dbReference>
<dbReference type="ExpressionAtlas" id="Q9T075">
    <property type="expression patterns" value="baseline and differential"/>
</dbReference>
<dbReference type="GO" id="GO:0005737">
    <property type="term" value="C:cytoplasm"/>
    <property type="evidence" value="ECO:0000314"/>
    <property type="project" value="UniProtKB"/>
</dbReference>
<dbReference type="GO" id="GO:0061630">
    <property type="term" value="F:ubiquitin protein ligase activity"/>
    <property type="evidence" value="ECO:0007669"/>
    <property type="project" value="InterPro"/>
</dbReference>
<dbReference type="GO" id="GO:0008270">
    <property type="term" value="F:zinc ion binding"/>
    <property type="evidence" value="ECO:0007669"/>
    <property type="project" value="UniProtKB-KW"/>
</dbReference>
<dbReference type="GO" id="GO:0043161">
    <property type="term" value="P:proteasome-mediated ubiquitin-dependent protein catabolic process"/>
    <property type="evidence" value="ECO:0007669"/>
    <property type="project" value="InterPro"/>
</dbReference>
<dbReference type="CDD" id="cd16652">
    <property type="entry name" value="dRING_Rmd5p-like"/>
    <property type="match status" value="1"/>
</dbReference>
<dbReference type="FunFam" id="3.30.40.10:FF:000143">
    <property type="entry name" value="Regulator of gluconeogenesis Rmd5"/>
    <property type="match status" value="1"/>
</dbReference>
<dbReference type="Gene3D" id="3.30.40.10">
    <property type="entry name" value="Zinc/RING finger domain, C3HC4 (zinc finger)"/>
    <property type="match status" value="1"/>
</dbReference>
<dbReference type="InterPro" id="IPR013144">
    <property type="entry name" value="CRA_dom"/>
</dbReference>
<dbReference type="InterPro" id="IPR024964">
    <property type="entry name" value="CTLH/CRA"/>
</dbReference>
<dbReference type="InterPro" id="IPR006595">
    <property type="entry name" value="CTLH_C"/>
</dbReference>
<dbReference type="InterPro" id="IPR045098">
    <property type="entry name" value="Fyv10_fam"/>
</dbReference>
<dbReference type="InterPro" id="IPR006594">
    <property type="entry name" value="LisH"/>
</dbReference>
<dbReference type="InterPro" id="IPR037683">
    <property type="entry name" value="Rmd5_dRing"/>
</dbReference>
<dbReference type="InterPro" id="IPR044063">
    <property type="entry name" value="ZF_RING_GID"/>
</dbReference>
<dbReference type="InterPro" id="IPR027370">
    <property type="entry name" value="Znf-RING_euk"/>
</dbReference>
<dbReference type="InterPro" id="IPR001841">
    <property type="entry name" value="Znf_RING"/>
</dbReference>
<dbReference type="InterPro" id="IPR013083">
    <property type="entry name" value="Znf_RING/FYVE/PHD"/>
</dbReference>
<dbReference type="PANTHER" id="PTHR12170">
    <property type="entry name" value="MACROPHAGE ERYTHROBLAST ATTACHER-RELATED"/>
    <property type="match status" value="1"/>
</dbReference>
<dbReference type="PANTHER" id="PTHR12170:SF11">
    <property type="entry name" value="PROTEIN RMD5 HOMOLOG"/>
    <property type="match status" value="1"/>
</dbReference>
<dbReference type="Pfam" id="PF10607">
    <property type="entry name" value="CTLH"/>
    <property type="match status" value="1"/>
</dbReference>
<dbReference type="Pfam" id="PF13445">
    <property type="entry name" value="zf-RING_UBOX"/>
    <property type="match status" value="1"/>
</dbReference>
<dbReference type="SMART" id="SM00757">
    <property type="entry name" value="CRA"/>
    <property type="match status" value="1"/>
</dbReference>
<dbReference type="SMART" id="SM00668">
    <property type="entry name" value="CTLH"/>
    <property type="match status" value="1"/>
</dbReference>
<dbReference type="SUPFAM" id="SSF57850">
    <property type="entry name" value="RING/U-box"/>
    <property type="match status" value="1"/>
</dbReference>
<dbReference type="PROSITE" id="PS50897">
    <property type="entry name" value="CTLH"/>
    <property type="match status" value="1"/>
</dbReference>
<dbReference type="PROSITE" id="PS50896">
    <property type="entry name" value="LISH"/>
    <property type="match status" value="1"/>
</dbReference>
<dbReference type="PROSITE" id="PS51867">
    <property type="entry name" value="ZF_RING_GID"/>
    <property type="match status" value="1"/>
</dbReference>
<protein>
    <recommendedName>
        <fullName evidence="5">Protein RMD5 homolog</fullName>
    </recommendedName>
</protein>
<accession>Q9T075</accession>
<sequence length="388" mass="44359">MELKSIKDAFDRVATKQKLSYSKTNEIVHMLSQEIDKALSILEETPSSDTMLLDHRSILADVKKVFMEIAPITQLEATEKELHAALTKYPKVLEKQLNPDISKAYRHNVEFDTHIVNQIIANFFYRQGMFDIGDCFVAETGESECSTRQSFVEMYRILEAMKRRDLEPALNWAVSNSDKLKEARSDLEMKLHSLHFLEIARGKNSKEAIDYARKHIATFADSCLPEIQKLMCSLLWNRKLDKSPYSEFLSPALWNNAVKELTRQYCNLLGESSESPLSITVTAGTQALPVLLKYMNVVMANKKLDWQTMEQLPVDAQLSEEFQFHSVFVCPVSKEQSSDDNPPMMMSCGHVLCKQTINKMSKNGSKSSFKCPYCPTDVDISRCRQLHF</sequence>
<keyword id="KW-0963">Cytoplasm</keyword>
<keyword id="KW-0479">Metal-binding</keyword>
<keyword id="KW-1185">Reference proteome</keyword>
<keyword id="KW-0862">Zinc</keyword>
<keyword id="KW-0863">Zinc-finger</keyword>
<organism>
    <name type="scientific">Arabidopsis thaliana</name>
    <name type="common">Mouse-ear cress</name>
    <dbReference type="NCBI Taxonomy" id="3702"/>
    <lineage>
        <taxon>Eukaryota</taxon>
        <taxon>Viridiplantae</taxon>
        <taxon>Streptophyta</taxon>
        <taxon>Embryophyta</taxon>
        <taxon>Tracheophyta</taxon>
        <taxon>Spermatophyta</taxon>
        <taxon>Magnoliopsida</taxon>
        <taxon>eudicotyledons</taxon>
        <taxon>Gunneridae</taxon>
        <taxon>Pentapetalae</taxon>
        <taxon>rosids</taxon>
        <taxon>malvids</taxon>
        <taxon>Brassicales</taxon>
        <taxon>Brassicaceae</taxon>
        <taxon>Camelineae</taxon>
        <taxon>Arabidopsis</taxon>
    </lineage>
</organism>
<gene>
    <name evidence="5" type="primary">RMD5</name>
    <name evidence="6" type="ordered locus">At4g37880</name>
</gene>
<reference key="1">
    <citation type="journal article" date="1999" name="Nature">
        <title>Sequence and analysis of chromosome 4 of the plant Arabidopsis thaliana.</title>
        <authorList>
            <person name="Mayer K.F.X."/>
            <person name="Schueller C."/>
            <person name="Wambutt R."/>
            <person name="Murphy G."/>
            <person name="Volckaert G."/>
            <person name="Pohl T."/>
            <person name="Duesterhoeft A."/>
            <person name="Stiekema W."/>
            <person name="Entian K.-D."/>
            <person name="Terryn N."/>
            <person name="Harris B."/>
            <person name="Ansorge W."/>
            <person name="Brandt P."/>
            <person name="Grivell L.A."/>
            <person name="Rieger M."/>
            <person name="Weichselgartner M."/>
            <person name="de Simone V."/>
            <person name="Obermaier B."/>
            <person name="Mache R."/>
            <person name="Mueller M."/>
            <person name="Kreis M."/>
            <person name="Delseny M."/>
            <person name="Puigdomenech P."/>
            <person name="Watson M."/>
            <person name="Schmidtheini T."/>
            <person name="Reichert B."/>
            <person name="Portetelle D."/>
            <person name="Perez-Alonso M."/>
            <person name="Boutry M."/>
            <person name="Bancroft I."/>
            <person name="Vos P."/>
            <person name="Hoheisel J."/>
            <person name="Zimmermann W."/>
            <person name="Wedler H."/>
            <person name="Ridley P."/>
            <person name="Langham S.-A."/>
            <person name="McCullagh B."/>
            <person name="Bilham L."/>
            <person name="Robben J."/>
            <person name="van der Schueren J."/>
            <person name="Grymonprez B."/>
            <person name="Chuang Y.-J."/>
            <person name="Vandenbussche F."/>
            <person name="Braeken M."/>
            <person name="Weltjens I."/>
            <person name="Voet M."/>
            <person name="Bastiaens I."/>
            <person name="Aert R."/>
            <person name="Defoor E."/>
            <person name="Weitzenegger T."/>
            <person name="Bothe G."/>
            <person name="Ramsperger U."/>
            <person name="Hilbert H."/>
            <person name="Braun M."/>
            <person name="Holzer E."/>
            <person name="Brandt A."/>
            <person name="Peters S."/>
            <person name="van Staveren M."/>
            <person name="Dirkse W."/>
            <person name="Mooijman P."/>
            <person name="Klein Lankhorst R."/>
            <person name="Rose M."/>
            <person name="Hauf J."/>
            <person name="Koetter P."/>
            <person name="Berneiser S."/>
            <person name="Hempel S."/>
            <person name="Feldpausch M."/>
            <person name="Lamberth S."/>
            <person name="Van den Daele H."/>
            <person name="De Keyser A."/>
            <person name="Buysshaert C."/>
            <person name="Gielen J."/>
            <person name="Villarroel R."/>
            <person name="De Clercq R."/>
            <person name="van Montagu M."/>
            <person name="Rogers J."/>
            <person name="Cronin A."/>
            <person name="Quail M.A."/>
            <person name="Bray-Allen S."/>
            <person name="Clark L."/>
            <person name="Doggett J."/>
            <person name="Hall S."/>
            <person name="Kay M."/>
            <person name="Lennard N."/>
            <person name="McLay K."/>
            <person name="Mayes R."/>
            <person name="Pettett A."/>
            <person name="Rajandream M.A."/>
            <person name="Lyne M."/>
            <person name="Benes V."/>
            <person name="Rechmann S."/>
            <person name="Borkova D."/>
            <person name="Bloecker H."/>
            <person name="Scharfe M."/>
            <person name="Grimm M."/>
            <person name="Loehnert T.-H."/>
            <person name="Dose S."/>
            <person name="de Haan M."/>
            <person name="Maarse A.C."/>
            <person name="Schaefer M."/>
            <person name="Mueller-Auer S."/>
            <person name="Gabel C."/>
            <person name="Fuchs M."/>
            <person name="Fartmann B."/>
            <person name="Granderath K."/>
            <person name="Dauner D."/>
            <person name="Herzl A."/>
            <person name="Neumann S."/>
            <person name="Argiriou A."/>
            <person name="Vitale D."/>
            <person name="Liguori R."/>
            <person name="Piravandi E."/>
            <person name="Massenet O."/>
            <person name="Quigley F."/>
            <person name="Clabauld G."/>
            <person name="Muendlein A."/>
            <person name="Felber R."/>
            <person name="Schnabl S."/>
            <person name="Hiller R."/>
            <person name="Schmidt W."/>
            <person name="Lecharny A."/>
            <person name="Aubourg S."/>
            <person name="Chefdor F."/>
            <person name="Cooke R."/>
            <person name="Berger C."/>
            <person name="Monfort A."/>
            <person name="Casacuberta E."/>
            <person name="Gibbons T."/>
            <person name="Weber N."/>
            <person name="Vandenbol M."/>
            <person name="Bargues M."/>
            <person name="Terol J."/>
            <person name="Torres A."/>
            <person name="Perez-Perez A."/>
            <person name="Purnelle B."/>
            <person name="Bent E."/>
            <person name="Johnson S."/>
            <person name="Tacon D."/>
            <person name="Jesse T."/>
            <person name="Heijnen L."/>
            <person name="Schwarz S."/>
            <person name="Scholler P."/>
            <person name="Heber S."/>
            <person name="Francs P."/>
            <person name="Bielke C."/>
            <person name="Frishman D."/>
            <person name="Haase D."/>
            <person name="Lemcke K."/>
            <person name="Mewes H.-W."/>
            <person name="Stocker S."/>
            <person name="Zaccaria P."/>
            <person name="Bevan M."/>
            <person name="Wilson R.K."/>
            <person name="de la Bastide M."/>
            <person name="Habermann K."/>
            <person name="Parnell L."/>
            <person name="Dedhia N."/>
            <person name="Gnoj L."/>
            <person name="Schutz K."/>
            <person name="Huang E."/>
            <person name="Spiegel L."/>
            <person name="Sekhon M."/>
            <person name="Murray J."/>
            <person name="Sheet P."/>
            <person name="Cordes M."/>
            <person name="Abu-Threideh J."/>
            <person name="Stoneking T."/>
            <person name="Kalicki J."/>
            <person name="Graves T."/>
            <person name="Harmon G."/>
            <person name="Edwards J."/>
            <person name="Latreille P."/>
            <person name="Courtney L."/>
            <person name="Cloud J."/>
            <person name="Abbott A."/>
            <person name="Scott K."/>
            <person name="Johnson D."/>
            <person name="Minx P."/>
            <person name="Bentley D."/>
            <person name="Fulton B."/>
            <person name="Miller N."/>
            <person name="Greco T."/>
            <person name="Kemp K."/>
            <person name="Kramer J."/>
            <person name="Fulton L."/>
            <person name="Mardis E."/>
            <person name="Dante M."/>
            <person name="Pepin K."/>
            <person name="Hillier L.W."/>
            <person name="Nelson J."/>
            <person name="Spieth J."/>
            <person name="Ryan E."/>
            <person name="Andrews S."/>
            <person name="Geisel C."/>
            <person name="Layman D."/>
            <person name="Du H."/>
            <person name="Ali J."/>
            <person name="Berghoff A."/>
            <person name="Jones K."/>
            <person name="Drone K."/>
            <person name="Cotton M."/>
            <person name="Joshu C."/>
            <person name="Antonoiu B."/>
            <person name="Zidanic M."/>
            <person name="Strong C."/>
            <person name="Sun H."/>
            <person name="Lamar B."/>
            <person name="Yordan C."/>
            <person name="Ma P."/>
            <person name="Zhong J."/>
            <person name="Preston R."/>
            <person name="Vil D."/>
            <person name="Shekher M."/>
            <person name="Matero A."/>
            <person name="Shah R."/>
            <person name="Swaby I.K."/>
            <person name="O'Shaughnessy A."/>
            <person name="Rodriguez M."/>
            <person name="Hoffman J."/>
            <person name="Till S."/>
            <person name="Granat S."/>
            <person name="Shohdy N."/>
            <person name="Hasegawa A."/>
            <person name="Hameed A."/>
            <person name="Lodhi M."/>
            <person name="Johnson A."/>
            <person name="Chen E."/>
            <person name="Marra M.A."/>
            <person name="Martienssen R."/>
            <person name="McCombie W.R."/>
        </authorList>
    </citation>
    <scope>NUCLEOTIDE SEQUENCE [LARGE SCALE GENOMIC DNA]</scope>
    <source>
        <strain>cv. Columbia</strain>
    </source>
</reference>
<reference key="2">
    <citation type="journal article" date="2017" name="Plant J.">
        <title>Araport11: a complete reannotation of the Arabidopsis thaliana reference genome.</title>
        <authorList>
            <person name="Cheng C.Y."/>
            <person name="Krishnakumar V."/>
            <person name="Chan A.P."/>
            <person name="Thibaud-Nissen F."/>
            <person name="Schobel S."/>
            <person name="Town C.D."/>
        </authorList>
    </citation>
    <scope>GENOME REANNOTATION</scope>
    <source>
        <strain>cv. Columbia</strain>
    </source>
</reference>
<reference key="3">
    <citation type="submission" date="2005-03" db="EMBL/GenBank/DDBJ databases">
        <title>Arabidopsis ORF clones.</title>
        <authorList>
            <person name="Kim C.J."/>
            <person name="Chen H."/>
            <person name="Cheuk R.F."/>
            <person name="Shinn P."/>
            <person name="Ecker J.R."/>
        </authorList>
    </citation>
    <scope>NUCLEOTIDE SEQUENCE [LARGE SCALE MRNA]</scope>
    <source>
        <strain>cv. Columbia</strain>
    </source>
</reference>
<reference key="4">
    <citation type="journal article" date="2012" name="BMC Plant Biol.">
        <title>Interactions of an Arabidopsis RanBPM homologue with LisH-CTLH domain proteins revealed high conservation of CTLH complexes in eukaryotes.</title>
        <authorList>
            <person name="Tomastikova E."/>
            <person name="Cenklova V."/>
            <person name="Kohoutova L."/>
            <person name="Petrovska B."/>
            <person name="Vachova L."/>
            <person name="Halada P."/>
            <person name="Kocarova G."/>
            <person name="Binarova P."/>
        </authorList>
    </citation>
    <scope>IDENTIFICATION BY MASS SPECTROMETRY</scope>
    <scope>INTERACTION WITH RANBPM</scope>
    <scope>SUBCELLULAR LOCATION</scope>
</reference>
<name>RMD5_ARATH</name>
<comment type="subunit">
    <text evidence="4">Interacts with RANBPM.</text>
</comment>
<comment type="subcellular location">
    <subcellularLocation>
        <location evidence="4">Cytoplasm</location>
    </subcellularLocation>
    <text evidence="4">Associates predominantly in the form of large cytoplasmic complexes.</text>
</comment>
<proteinExistence type="evidence at protein level"/>
<feature type="chain" id="PRO_0000442062" description="Protein RMD5 homolog">
    <location>
        <begin position="1"/>
        <end position="388"/>
    </location>
</feature>
<feature type="domain" description="LisH" evidence="2">
    <location>
        <begin position="112"/>
        <end position="144"/>
    </location>
</feature>
<feature type="domain" description="CTLH" evidence="1">
    <location>
        <begin position="150"/>
        <end position="207"/>
    </location>
</feature>
<feature type="zinc finger region" description="RING-Gid-type" evidence="3">
    <location>
        <begin position="330"/>
        <end position="374"/>
    </location>
</feature>
<evidence type="ECO:0000255" key="1">
    <source>
        <dbReference type="PROSITE-ProRule" id="PRU00058"/>
    </source>
</evidence>
<evidence type="ECO:0000255" key="2">
    <source>
        <dbReference type="PROSITE-ProRule" id="PRU00126"/>
    </source>
</evidence>
<evidence type="ECO:0000255" key="3">
    <source>
        <dbReference type="PROSITE-ProRule" id="PRU01215"/>
    </source>
</evidence>
<evidence type="ECO:0000269" key="4">
    <source>
    </source>
</evidence>
<evidence type="ECO:0000305" key="5"/>
<evidence type="ECO:0000312" key="6">
    <source>
        <dbReference type="Araport" id="AT4G37880"/>
    </source>
</evidence>